<gene>
    <name evidence="7" type="primary">bbln-1</name>
    <name evidence="7" type="ORF">C15C7.5</name>
    <name evidence="5" type="ORF">CELE_C15C7.5</name>
</gene>
<comment type="function">
    <text evidence="3">Dynamic component of the endotube in intestinal cells, interacts with intermediate filament and regulates intestinal lumen morphology.</text>
</comment>
<comment type="subcellular location">
    <subcellularLocation>
        <location evidence="3">Cell junction</location>
    </subcellularLocation>
    <subcellularLocation>
        <location evidence="3">Cytoplasm</location>
        <location evidence="3">Cytoskeleton</location>
    </subcellularLocation>
    <text evidence="3">In the intestine, localizes subapically and at cell junctions, indicating localization to the endotube. Interacts with intermediate filament (IF) proteins and localizes to the IF network in an IF-dependent manner.</text>
</comment>
<comment type="tissue specificity">
    <text evidence="3">Expressed in many epithelial tissues, including the pharynx, intestine, excretory canal and hypodermis.</text>
</comment>
<comment type="developmental stage">
    <text evidence="3">First apparent at the comma stage of embryonic development, at the apical domain of intestinal cells. In subsequent embryonic stages, becomes visible in the hypodermis and pharynx. In larval and adult stages, detected in many epithelial tissues, including the pharynx, intestine, excretory canal and hypodermis.</text>
</comment>
<comment type="disruption phenotype">
    <text evidence="3">Mutants are viable but developmentally delayed. They have bubble-shaped invaginations of the apical membrane into the cytoplasm of intestinal cells and abnormal aggregations of the subapical intermediate filament (IF) network.</text>
</comment>
<accession>Q18012</accession>
<evidence type="ECO:0000255" key="1"/>
<evidence type="ECO:0000256" key="2">
    <source>
        <dbReference type="SAM" id="MobiDB-lite"/>
    </source>
</evidence>
<evidence type="ECO:0000269" key="3">
    <source>
    </source>
</evidence>
<evidence type="ECO:0000305" key="4"/>
<evidence type="ECO:0000312" key="5">
    <source>
        <dbReference type="EMBL" id="CCD64589.1"/>
    </source>
</evidence>
<evidence type="ECO:0000312" key="6">
    <source>
        <dbReference type="Proteomes" id="UP000001940"/>
    </source>
</evidence>
<evidence type="ECO:0000312" key="7">
    <source>
        <dbReference type="WormBase" id="C15C7.5"/>
    </source>
</evidence>
<feature type="chain" id="PRO_0000457117" description="Bublin coiled-coil protein">
    <location>
        <begin position="1"/>
        <end position="125"/>
    </location>
</feature>
<feature type="region of interest" description="Disordered" evidence="2">
    <location>
        <begin position="79"/>
        <end position="125"/>
    </location>
</feature>
<feature type="coiled-coil region" evidence="1">
    <location>
        <begin position="46"/>
        <end position="95"/>
    </location>
</feature>
<name>BBLN_CAEEL</name>
<keyword id="KW-0965">Cell junction</keyword>
<keyword id="KW-0175">Coiled coil</keyword>
<keyword id="KW-0963">Cytoplasm</keyword>
<keyword id="KW-0206">Cytoskeleton</keyword>
<keyword id="KW-1185">Reference proteome</keyword>
<organism evidence="5 6">
    <name type="scientific">Caenorhabditis elegans</name>
    <dbReference type="NCBI Taxonomy" id="6239"/>
    <lineage>
        <taxon>Eukaryota</taxon>
        <taxon>Metazoa</taxon>
        <taxon>Ecdysozoa</taxon>
        <taxon>Nematoda</taxon>
        <taxon>Chromadorea</taxon>
        <taxon>Rhabditida</taxon>
        <taxon>Rhabditina</taxon>
        <taxon>Rhabditomorpha</taxon>
        <taxon>Rhabditoidea</taxon>
        <taxon>Rhabditidae</taxon>
        <taxon>Peloderinae</taxon>
        <taxon>Caenorhabditis</taxon>
    </lineage>
</organism>
<proteinExistence type="evidence at transcript level"/>
<dbReference type="EMBL" id="BX284606">
    <property type="protein sequence ID" value="CCD64589.1"/>
    <property type="molecule type" value="Genomic_DNA"/>
</dbReference>
<dbReference type="PIR" id="T15509">
    <property type="entry name" value="T15509"/>
</dbReference>
<dbReference type="RefSeq" id="NP_508542.1">
    <property type="nucleotide sequence ID" value="NM_076141.7"/>
</dbReference>
<dbReference type="SMR" id="Q18012"/>
<dbReference type="FunCoup" id="Q18012">
    <property type="interactions" value="47"/>
</dbReference>
<dbReference type="IntAct" id="Q18012">
    <property type="interactions" value="2"/>
</dbReference>
<dbReference type="STRING" id="6239.C15C7.5.1"/>
<dbReference type="PaxDb" id="6239-C15C7.5"/>
<dbReference type="PeptideAtlas" id="Q18012"/>
<dbReference type="EnsemblMetazoa" id="C15C7.5.1">
    <property type="protein sequence ID" value="C15C7.5.1"/>
    <property type="gene ID" value="WBGene00015791"/>
</dbReference>
<dbReference type="EnsemblMetazoa" id="C15C7.5.2">
    <property type="protein sequence ID" value="C15C7.5.2"/>
    <property type="gene ID" value="WBGene00015791"/>
</dbReference>
<dbReference type="GeneID" id="180605"/>
<dbReference type="KEGG" id="cel:CELE_C15C7.5"/>
<dbReference type="UCSC" id="C15C7.5">
    <property type="organism name" value="c. elegans"/>
</dbReference>
<dbReference type="AGR" id="WB:WBGene00015791"/>
<dbReference type="CTD" id="180605"/>
<dbReference type="WormBase" id="C15C7.5">
    <property type="protein sequence ID" value="CE03991"/>
    <property type="gene ID" value="WBGene00015791"/>
    <property type="gene designation" value="bbln-1"/>
</dbReference>
<dbReference type="eggNOG" id="ENOG502S5T9">
    <property type="taxonomic scope" value="Eukaryota"/>
</dbReference>
<dbReference type="HOGENOM" id="CLU_147618_0_0_1"/>
<dbReference type="InParanoid" id="Q18012"/>
<dbReference type="OMA" id="FHERMSQ"/>
<dbReference type="OrthoDB" id="5868102at2759"/>
<dbReference type="PRO" id="PR:Q18012"/>
<dbReference type="Proteomes" id="UP000001940">
    <property type="component" value="Chromosome X"/>
</dbReference>
<dbReference type="Bgee" id="WBGene00015791">
    <property type="expression patterns" value="Expressed in larva and 3 other cell types or tissues"/>
</dbReference>
<dbReference type="GO" id="GO:0070161">
    <property type="term" value="C:anchoring junction"/>
    <property type="evidence" value="ECO:0007669"/>
    <property type="project" value="UniProtKB-SubCell"/>
</dbReference>
<dbReference type="GO" id="GO:0030054">
    <property type="term" value="C:cell junction"/>
    <property type="evidence" value="ECO:0000315"/>
    <property type="project" value="UniProtKB"/>
</dbReference>
<dbReference type="GO" id="GO:0005737">
    <property type="term" value="C:cytoplasm"/>
    <property type="evidence" value="ECO:0007669"/>
    <property type="project" value="UniProtKB-KW"/>
</dbReference>
<dbReference type="GO" id="GO:0005856">
    <property type="term" value="C:cytoskeleton"/>
    <property type="evidence" value="ECO:0007669"/>
    <property type="project" value="UniProtKB-SubCell"/>
</dbReference>
<dbReference type="GO" id="GO:0120219">
    <property type="term" value="C:subapical part of cell"/>
    <property type="evidence" value="ECO:0000315"/>
    <property type="project" value="UniProtKB"/>
</dbReference>
<dbReference type="GO" id="GO:0060090">
    <property type="term" value="F:molecular adaptor activity"/>
    <property type="evidence" value="ECO:0000315"/>
    <property type="project" value="UniProtKB"/>
</dbReference>
<dbReference type="GO" id="GO:0045110">
    <property type="term" value="P:intermediate filament bundle assembly"/>
    <property type="evidence" value="ECO:0000315"/>
    <property type="project" value="UniProtKB"/>
</dbReference>
<reference evidence="5 6" key="1">
    <citation type="journal article" date="1998" name="Science">
        <title>Genome sequence of the nematode C. elegans: a platform for investigating biology.</title>
        <authorList>
            <consortium name="The C. elegans sequencing consortium"/>
        </authorList>
    </citation>
    <scope>NUCLEOTIDE SEQUENCE [LARGE SCALE GENOMIC DNA]</scope>
    <source>
        <strain evidence="5 6">Bristol N2</strain>
    </source>
</reference>
<reference key="2">
    <citation type="journal article" date="2021" name="Curr. Biol.">
        <title>BBLN-1 is essential for intermediate filament organization and apical membrane morphology.</title>
        <authorList>
            <person name="Remmelzwaal S."/>
            <person name="Geisler F."/>
            <person name="Stucchi R."/>
            <person name="van der Horst S."/>
            <person name="Pasolli M."/>
            <person name="Kroll J.R."/>
            <person name="Jarosinska O.D."/>
            <person name="Akhmanova A."/>
            <person name="Richardson C.A."/>
            <person name="Altelaar M."/>
            <person name="Leube R.E."/>
            <person name="Ramalho J.J."/>
            <person name="Boxem M."/>
        </authorList>
    </citation>
    <scope>FUNCTION</scope>
    <scope>DISRUPTION PHENOTYPE</scope>
    <scope>TISSUE SPECIFICITY</scope>
    <scope>SUBCELLULAR LOCATION</scope>
    <scope>DEVELOPMENTAL STAGE</scope>
</reference>
<sequence length="125" mass="14973">MVVEQKEQEPIVKMRDRNVNAAAHSALARGIEALNEGEVTEETEEIRKLDTQLDHLNDYMSKMEERLKAHNDRMMETLKQQKEEREKRRRSFHERMSQNQSEDEEFKKQMSSILKRVQSVKRTEK</sequence>
<protein>
    <recommendedName>
        <fullName evidence="4">Bublin coiled-coil protein</fullName>
    </recommendedName>
</protein>